<organism>
    <name type="scientific">Salmonella typhimurium (strain LT2 / SGSC1412 / ATCC 700720)</name>
    <dbReference type="NCBI Taxonomy" id="99287"/>
    <lineage>
        <taxon>Bacteria</taxon>
        <taxon>Pseudomonadati</taxon>
        <taxon>Pseudomonadota</taxon>
        <taxon>Gammaproteobacteria</taxon>
        <taxon>Enterobacterales</taxon>
        <taxon>Enterobacteriaceae</taxon>
        <taxon>Salmonella</taxon>
    </lineage>
</organism>
<comment type="subcellular location">
    <subcellularLocation>
        <location evidence="1">Cell membrane</location>
        <topology evidence="1">Single-pass membrane protein</topology>
    </subcellularLocation>
</comment>
<comment type="similarity">
    <text evidence="3">Belongs to the Smp family.</text>
</comment>
<dbReference type="EMBL" id="AE006468">
    <property type="protein sequence ID" value="AAL23392.1"/>
    <property type="molecule type" value="Genomic_DNA"/>
</dbReference>
<dbReference type="RefSeq" id="NP_463433.2">
    <property type="nucleotide sequence ID" value="NC_003197.2"/>
</dbReference>
<dbReference type="SMR" id="Q8ZJV0"/>
<dbReference type="STRING" id="99287.STM4577"/>
<dbReference type="PaxDb" id="99287-STM4577"/>
<dbReference type="GeneID" id="1256103"/>
<dbReference type="KEGG" id="stm:STM4577"/>
<dbReference type="PATRIC" id="fig|99287.12.peg.4819"/>
<dbReference type="HOGENOM" id="CLU_093836_0_0_6"/>
<dbReference type="PhylomeDB" id="Q8ZJV0"/>
<dbReference type="BioCyc" id="SENT99287:STM4577-MONOMER"/>
<dbReference type="Proteomes" id="UP000001014">
    <property type="component" value="Chromosome"/>
</dbReference>
<dbReference type="GO" id="GO:0005886">
    <property type="term" value="C:plasma membrane"/>
    <property type="evidence" value="ECO:0007669"/>
    <property type="project" value="UniProtKB-SubCell"/>
</dbReference>
<dbReference type="InterPro" id="IPR019305">
    <property type="entry name" value="Uncharacterised_Smp"/>
</dbReference>
<dbReference type="NCBIfam" id="NF008419">
    <property type="entry name" value="PRK11246.1"/>
    <property type="match status" value="1"/>
</dbReference>
<dbReference type="Pfam" id="PF10144">
    <property type="entry name" value="SMP_2"/>
    <property type="match status" value="1"/>
</dbReference>
<protein>
    <recommendedName>
        <fullName>Protein Smp</fullName>
    </recommendedName>
</protein>
<keyword id="KW-1003">Cell membrane</keyword>
<keyword id="KW-0472">Membrane</keyword>
<keyword id="KW-1185">Reference proteome</keyword>
<keyword id="KW-0732">Signal</keyword>
<keyword id="KW-0812">Transmembrane</keyword>
<keyword id="KW-1133">Transmembrane helix</keyword>
<proteinExistence type="inferred from homology"/>
<name>SMP_SALTY</name>
<accession>Q8ZJV0</accession>
<evidence type="ECO:0000250" key="1"/>
<evidence type="ECO:0000255" key="2"/>
<evidence type="ECO:0000305" key="3"/>
<gene>
    <name type="primary">smp</name>
    <name type="ordered locus">STM4577</name>
</gene>
<feature type="signal peptide" evidence="2">
    <location>
        <begin position="1"/>
        <end position="30"/>
    </location>
</feature>
<feature type="chain" id="PRO_0000032805" description="Protein Smp">
    <location>
        <begin position="31"/>
        <end position="214"/>
    </location>
</feature>
<feature type="transmembrane region" description="Helical" evidence="2">
    <location>
        <begin position="164"/>
        <end position="184"/>
    </location>
</feature>
<reference key="1">
    <citation type="journal article" date="2001" name="Nature">
        <title>Complete genome sequence of Salmonella enterica serovar Typhimurium LT2.</title>
        <authorList>
            <person name="McClelland M."/>
            <person name="Sanderson K.E."/>
            <person name="Spieth J."/>
            <person name="Clifton S.W."/>
            <person name="Latreille P."/>
            <person name="Courtney L."/>
            <person name="Porwollik S."/>
            <person name="Ali J."/>
            <person name="Dante M."/>
            <person name="Du F."/>
            <person name="Hou S."/>
            <person name="Layman D."/>
            <person name="Leonard S."/>
            <person name="Nguyen C."/>
            <person name="Scott K."/>
            <person name="Holmes A."/>
            <person name="Grewal N."/>
            <person name="Mulvaney E."/>
            <person name="Ryan E."/>
            <person name="Sun H."/>
            <person name="Florea L."/>
            <person name="Miller W."/>
            <person name="Stoneking T."/>
            <person name="Nhan M."/>
            <person name="Waterston R."/>
            <person name="Wilson R.K."/>
        </authorList>
    </citation>
    <scope>NUCLEOTIDE SEQUENCE [LARGE SCALE GENOMIC DNA]</scope>
    <source>
        <strain>LT2 / SGSC1412 / ATCC 700720</strain>
    </source>
</reference>
<sequence length="214" mass="24274">MARAKLKFRLHRAVIVLFCLTLLVALMQGASWFSQNHQRQRNPQLEELARTLARQVTLNIAPLMRSETPDENRINAVLRHVTQESRILDAGVYDEQGDLITRAGESVNVRDRLALDGKKAGSYFNQQIVEPIQGKNGPLGYLRLTLDTHTLATEAKQVDNTTNILRLMLLLSLAIGVVLTRTLLQGKRTRWQQSPFLLTASKPVPEEEEREEKE</sequence>